<name>ARGR_ESCF3</name>
<evidence type="ECO:0000255" key="1">
    <source>
        <dbReference type="HAMAP-Rule" id="MF_00173"/>
    </source>
</evidence>
<reference key="1">
    <citation type="journal article" date="2009" name="PLoS Genet.">
        <title>Organised genome dynamics in the Escherichia coli species results in highly diverse adaptive paths.</title>
        <authorList>
            <person name="Touchon M."/>
            <person name="Hoede C."/>
            <person name="Tenaillon O."/>
            <person name="Barbe V."/>
            <person name="Baeriswyl S."/>
            <person name="Bidet P."/>
            <person name="Bingen E."/>
            <person name="Bonacorsi S."/>
            <person name="Bouchier C."/>
            <person name="Bouvet O."/>
            <person name="Calteau A."/>
            <person name="Chiapello H."/>
            <person name="Clermont O."/>
            <person name="Cruveiller S."/>
            <person name="Danchin A."/>
            <person name="Diard M."/>
            <person name="Dossat C."/>
            <person name="Karoui M.E."/>
            <person name="Frapy E."/>
            <person name="Garry L."/>
            <person name="Ghigo J.M."/>
            <person name="Gilles A.M."/>
            <person name="Johnson J."/>
            <person name="Le Bouguenec C."/>
            <person name="Lescat M."/>
            <person name="Mangenot S."/>
            <person name="Martinez-Jehanne V."/>
            <person name="Matic I."/>
            <person name="Nassif X."/>
            <person name="Oztas S."/>
            <person name="Petit M.A."/>
            <person name="Pichon C."/>
            <person name="Rouy Z."/>
            <person name="Ruf C.S."/>
            <person name="Schneider D."/>
            <person name="Tourret J."/>
            <person name="Vacherie B."/>
            <person name="Vallenet D."/>
            <person name="Medigue C."/>
            <person name="Rocha E.P.C."/>
            <person name="Denamur E."/>
        </authorList>
    </citation>
    <scope>NUCLEOTIDE SEQUENCE [LARGE SCALE GENOMIC DNA]</scope>
    <source>
        <strain>ATCC 35469 / DSM 13698 / BCRC 15582 / CCUG 18766 / IAM 14443 / JCM 21226 / LMG 7866 / NBRC 102419 / NCTC 12128 / CDC 0568-73</strain>
    </source>
</reference>
<dbReference type="EMBL" id="CU928158">
    <property type="protein sequence ID" value="CAQ90708.1"/>
    <property type="molecule type" value="Genomic_DNA"/>
</dbReference>
<dbReference type="RefSeq" id="WP_001257854.1">
    <property type="nucleotide sequence ID" value="NC_011740.1"/>
</dbReference>
<dbReference type="SMR" id="B7LRL2"/>
<dbReference type="GeneID" id="75060169"/>
<dbReference type="KEGG" id="efe:EFER_3215"/>
<dbReference type="HOGENOM" id="CLU_097103_2_0_6"/>
<dbReference type="OrthoDB" id="7060358at2"/>
<dbReference type="UniPathway" id="UPA00068"/>
<dbReference type="Proteomes" id="UP000000745">
    <property type="component" value="Chromosome"/>
</dbReference>
<dbReference type="GO" id="GO:0005737">
    <property type="term" value="C:cytoplasm"/>
    <property type="evidence" value="ECO:0007669"/>
    <property type="project" value="UniProtKB-SubCell"/>
</dbReference>
<dbReference type="GO" id="GO:0034618">
    <property type="term" value="F:arginine binding"/>
    <property type="evidence" value="ECO:0007669"/>
    <property type="project" value="InterPro"/>
</dbReference>
<dbReference type="GO" id="GO:0003677">
    <property type="term" value="F:DNA binding"/>
    <property type="evidence" value="ECO:0007669"/>
    <property type="project" value="UniProtKB-KW"/>
</dbReference>
<dbReference type="GO" id="GO:0003700">
    <property type="term" value="F:DNA-binding transcription factor activity"/>
    <property type="evidence" value="ECO:0007669"/>
    <property type="project" value="UniProtKB-UniRule"/>
</dbReference>
<dbReference type="GO" id="GO:0006526">
    <property type="term" value="P:L-arginine biosynthetic process"/>
    <property type="evidence" value="ECO:0007669"/>
    <property type="project" value="UniProtKB-UniPathway"/>
</dbReference>
<dbReference type="GO" id="GO:0051259">
    <property type="term" value="P:protein complex oligomerization"/>
    <property type="evidence" value="ECO:0007669"/>
    <property type="project" value="InterPro"/>
</dbReference>
<dbReference type="GO" id="GO:1900079">
    <property type="term" value="P:regulation of arginine biosynthetic process"/>
    <property type="evidence" value="ECO:0007669"/>
    <property type="project" value="UniProtKB-UniRule"/>
</dbReference>
<dbReference type="FunFam" id="1.10.10.10:FF:000074">
    <property type="entry name" value="Arginine repressor"/>
    <property type="match status" value="1"/>
</dbReference>
<dbReference type="FunFam" id="3.30.1360.40:FF:000004">
    <property type="entry name" value="Arginine repressor"/>
    <property type="match status" value="1"/>
</dbReference>
<dbReference type="Gene3D" id="3.30.1360.40">
    <property type="match status" value="1"/>
</dbReference>
<dbReference type="Gene3D" id="1.10.10.10">
    <property type="entry name" value="Winged helix-like DNA-binding domain superfamily/Winged helix DNA-binding domain"/>
    <property type="match status" value="1"/>
</dbReference>
<dbReference type="HAMAP" id="MF_00173">
    <property type="entry name" value="Arg_repressor"/>
    <property type="match status" value="1"/>
</dbReference>
<dbReference type="InterPro" id="IPR001669">
    <property type="entry name" value="Arg_repress"/>
</dbReference>
<dbReference type="InterPro" id="IPR020899">
    <property type="entry name" value="Arg_repress_C"/>
</dbReference>
<dbReference type="InterPro" id="IPR036251">
    <property type="entry name" value="Arg_repress_C_sf"/>
</dbReference>
<dbReference type="InterPro" id="IPR020900">
    <property type="entry name" value="Arg_repress_DNA-bd"/>
</dbReference>
<dbReference type="InterPro" id="IPR036388">
    <property type="entry name" value="WH-like_DNA-bd_sf"/>
</dbReference>
<dbReference type="InterPro" id="IPR036390">
    <property type="entry name" value="WH_DNA-bd_sf"/>
</dbReference>
<dbReference type="NCBIfam" id="TIGR01529">
    <property type="entry name" value="argR_whole"/>
    <property type="match status" value="1"/>
</dbReference>
<dbReference type="NCBIfam" id="NF003457">
    <property type="entry name" value="PRK05066.1"/>
    <property type="match status" value="1"/>
</dbReference>
<dbReference type="PANTHER" id="PTHR34471">
    <property type="entry name" value="ARGININE REPRESSOR"/>
    <property type="match status" value="1"/>
</dbReference>
<dbReference type="PANTHER" id="PTHR34471:SF1">
    <property type="entry name" value="ARGININE REPRESSOR"/>
    <property type="match status" value="1"/>
</dbReference>
<dbReference type="Pfam" id="PF01316">
    <property type="entry name" value="Arg_repressor"/>
    <property type="match status" value="1"/>
</dbReference>
<dbReference type="Pfam" id="PF02863">
    <property type="entry name" value="Arg_repressor_C"/>
    <property type="match status" value="1"/>
</dbReference>
<dbReference type="PRINTS" id="PR01467">
    <property type="entry name" value="ARGREPRESSOR"/>
</dbReference>
<dbReference type="SUPFAM" id="SSF55252">
    <property type="entry name" value="C-terminal domain of arginine repressor"/>
    <property type="match status" value="1"/>
</dbReference>
<dbReference type="SUPFAM" id="SSF46785">
    <property type="entry name" value="Winged helix' DNA-binding domain"/>
    <property type="match status" value="1"/>
</dbReference>
<feature type="chain" id="PRO_1000189561" description="Arginine repressor">
    <location>
        <begin position="1"/>
        <end position="156"/>
    </location>
</feature>
<sequence>MRSSAKQEELVRAFKALLKEEKFSSQGEIVVALQEQGFDNINQSKVSRMLTKFGAVRTRNAKMEMVYCLPAELGVPTTSSPLKNLVLDIDYNDAVVVIHTSPGAAQLIARLLDSLGKAEGILGTIAGDDTIFTTPASGFSVKELYEAILELFEQEL</sequence>
<comment type="function">
    <text evidence="1">Regulates arginine biosynthesis genes.</text>
</comment>
<comment type="pathway">
    <text>Amino-acid biosynthesis; L-arginine biosynthesis [regulation].</text>
</comment>
<comment type="subcellular location">
    <subcellularLocation>
        <location evidence="1">Cytoplasm</location>
    </subcellularLocation>
</comment>
<comment type="similarity">
    <text evidence="1">Belongs to the ArgR family.</text>
</comment>
<organism>
    <name type="scientific">Escherichia fergusonii (strain ATCC 35469 / DSM 13698 / CCUG 18766 / IAM 14443 / JCM 21226 / LMG 7866 / NBRC 102419 / NCTC 12128 / CDC 0568-73)</name>
    <dbReference type="NCBI Taxonomy" id="585054"/>
    <lineage>
        <taxon>Bacteria</taxon>
        <taxon>Pseudomonadati</taxon>
        <taxon>Pseudomonadota</taxon>
        <taxon>Gammaproteobacteria</taxon>
        <taxon>Enterobacterales</taxon>
        <taxon>Enterobacteriaceae</taxon>
        <taxon>Escherichia</taxon>
    </lineage>
</organism>
<keyword id="KW-0028">Amino-acid biosynthesis</keyword>
<keyword id="KW-0055">Arginine biosynthesis</keyword>
<keyword id="KW-0963">Cytoplasm</keyword>
<keyword id="KW-0238">DNA-binding</keyword>
<keyword id="KW-0678">Repressor</keyword>
<keyword id="KW-0804">Transcription</keyword>
<keyword id="KW-0805">Transcription regulation</keyword>
<accession>B7LRL2</accession>
<proteinExistence type="inferred from homology"/>
<gene>
    <name evidence="1" type="primary">argR</name>
    <name type="ordered locus">EFER_3215</name>
</gene>
<protein>
    <recommendedName>
        <fullName evidence="1">Arginine repressor</fullName>
    </recommendedName>
</protein>